<dbReference type="EC" id="2.7.7.27"/>
<dbReference type="EMBL" id="Z38111">
    <property type="protein sequence ID" value="CAA86227.1"/>
    <property type="molecule type" value="mRNA"/>
</dbReference>
<dbReference type="PIR" id="S49439">
    <property type="entry name" value="S49439"/>
</dbReference>
<dbReference type="SMR" id="P55234"/>
<dbReference type="FunCoup" id="P55234">
    <property type="interactions" value="278"/>
</dbReference>
<dbReference type="STRING" id="4577.P55234"/>
<dbReference type="PaxDb" id="4577-GRMZM2G027955_P01"/>
<dbReference type="MaizeGDB" id="113181"/>
<dbReference type="eggNOG" id="KOG1322">
    <property type="taxonomic scope" value="Eukaryota"/>
</dbReference>
<dbReference type="InParanoid" id="P55234"/>
<dbReference type="UniPathway" id="UPA00152"/>
<dbReference type="Proteomes" id="UP000007305">
    <property type="component" value="Unplaced"/>
</dbReference>
<dbReference type="ExpressionAtlas" id="P55234">
    <property type="expression patterns" value="baseline and differential"/>
</dbReference>
<dbReference type="GO" id="GO:0009501">
    <property type="term" value="C:amyloplast"/>
    <property type="evidence" value="ECO:0007669"/>
    <property type="project" value="UniProtKB-SubCell"/>
</dbReference>
<dbReference type="GO" id="GO:0009507">
    <property type="term" value="C:chloroplast"/>
    <property type="evidence" value="ECO:0007669"/>
    <property type="project" value="UniProtKB-SubCell"/>
</dbReference>
<dbReference type="GO" id="GO:0005524">
    <property type="term" value="F:ATP binding"/>
    <property type="evidence" value="ECO:0007669"/>
    <property type="project" value="UniProtKB-KW"/>
</dbReference>
<dbReference type="GO" id="GO:0008878">
    <property type="term" value="F:glucose-1-phosphate adenylyltransferase activity"/>
    <property type="evidence" value="ECO:0007669"/>
    <property type="project" value="UniProtKB-EC"/>
</dbReference>
<dbReference type="GO" id="GO:0005978">
    <property type="term" value="P:glycogen biosynthetic process"/>
    <property type="evidence" value="ECO:0007669"/>
    <property type="project" value="InterPro"/>
</dbReference>
<dbReference type="GO" id="GO:0019252">
    <property type="term" value="P:starch biosynthetic process"/>
    <property type="evidence" value="ECO:0007669"/>
    <property type="project" value="UniProtKB-UniPathway"/>
</dbReference>
<dbReference type="CDD" id="cd02508">
    <property type="entry name" value="ADP_Glucose_PP"/>
    <property type="match status" value="1"/>
</dbReference>
<dbReference type="CDD" id="cd04651">
    <property type="entry name" value="LbH_G1P_AT_C"/>
    <property type="match status" value="1"/>
</dbReference>
<dbReference type="Gene3D" id="2.160.10.10">
    <property type="entry name" value="Hexapeptide repeat proteins"/>
    <property type="match status" value="1"/>
</dbReference>
<dbReference type="Gene3D" id="3.90.550.10">
    <property type="entry name" value="Spore Coat Polysaccharide Biosynthesis Protein SpsA, Chain A"/>
    <property type="match status" value="1"/>
</dbReference>
<dbReference type="InterPro" id="IPR011831">
    <property type="entry name" value="ADP-Glc_PPase"/>
</dbReference>
<dbReference type="InterPro" id="IPR005836">
    <property type="entry name" value="ADP_Glu_pyroP_CS"/>
</dbReference>
<dbReference type="InterPro" id="IPR005835">
    <property type="entry name" value="NTP_transferase_dom"/>
</dbReference>
<dbReference type="InterPro" id="IPR029044">
    <property type="entry name" value="Nucleotide-diphossugar_trans"/>
</dbReference>
<dbReference type="InterPro" id="IPR011004">
    <property type="entry name" value="Trimer_LpxA-like_sf"/>
</dbReference>
<dbReference type="NCBIfam" id="TIGR02091">
    <property type="entry name" value="glgC"/>
    <property type="match status" value="1"/>
</dbReference>
<dbReference type="NCBIfam" id="NF002772">
    <property type="entry name" value="PRK02862.1"/>
    <property type="match status" value="1"/>
</dbReference>
<dbReference type="PANTHER" id="PTHR43523:SF12">
    <property type="entry name" value="GLUCOSE-1-PHOSPHATE ADENYLYLTRANSFERASE LARGE SUBUNIT 1, CHLOROPLASTIC-RELATED"/>
    <property type="match status" value="1"/>
</dbReference>
<dbReference type="PANTHER" id="PTHR43523">
    <property type="entry name" value="GLUCOSE-1-PHOSPHATE ADENYLYLTRANSFERASE-RELATED"/>
    <property type="match status" value="1"/>
</dbReference>
<dbReference type="Pfam" id="PF25247">
    <property type="entry name" value="LbH_GLGC"/>
    <property type="match status" value="1"/>
</dbReference>
<dbReference type="Pfam" id="PF00483">
    <property type="entry name" value="NTP_transferase"/>
    <property type="match status" value="1"/>
</dbReference>
<dbReference type="SUPFAM" id="SSF53448">
    <property type="entry name" value="Nucleotide-diphospho-sugar transferases"/>
    <property type="match status" value="1"/>
</dbReference>
<dbReference type="SUPFAM" id="SSF51161">
    <property type="entry name" value="Trimeric LpxA-like enzymes"/>
    <property type="match status" value="1"/>
</dbReference>
<dbReference type="PROSITE" id="PS00808">
    <property type="entry name" value="ADP_GLC_PYROPHOSPH_1"/>
    <property type="match status" value="1"/>
</dbReference>
<dbReference type="PROSITE" id="PS00809">
    <property type="entry name" value="ADP_GLC_PYROPHOSPH_2"/>
    <property type="match status" value="1"/>
</dbReference>
<dbReference type="PROSITE" id="PS00810">
    <property type="entry name" value="ADP_GLC_PYROPHOSPH_3"/>
    <property type="match status" value="1"/>
</dbReference>
<protein>
    <recommendedName>
        <fullName>Glucose-1-phosphate adenylyltransferase large subunit 2, chloroplastic/amyloplastic</fullName>
        <ecNumber>2.7.7.27</ecNumber>
    </recommendedName>
    <alternativeName>
        <fullName>ADP-glucose pyrophosphorylase</fullName>
    </alternativeName>
    <alternativeName>
        <fullName>ADP-glucose synthase</fullName>
    </alternativeName>
    <alternativeName>
        <fullName>AGPase S</fullName>
    </alternativeName>
    <alternativeName>
        <fullName>Alpha-D-glucose-1-phosphate adenyl transferase</fullName>
    </alternativeName>
</protein>
<comment type="function">
    <text>This protein plays a role in synthesis of starch. It catalyzes the synthesis of the activated glycosyl donor, ADP-glucose from Glc-1-P and ATP.</text>
</comment>
<comment type="catalytic activity">
    <reaction>
        <text>alpha-D-glucose 1-phosphate + ATP + H(+) = ADP-alpha-D-glucose + diphosphate</text>
        <dbReference type="Rhea" id="RHEA:12120"/>
        <dbReference type="ChEBI" id="CHEBI:15378"/>
        <dbReference type="ChEBI" id="CHEBI:30616"/>
        <dbReference type="ChEBI" id="CHEBI:33019"/>
        <dbReference type="ChEBI" id="CHEBI:57498"/>
        <dbReference type="ChEBI" id="CHEBI:58601"/>
        <dbReference type="EC" id="2.7.7.27"/>
    </reaction>
</comment>
<comment type="activity regulation">
    <text>Activated by 3'phosphoglycerate, inhibited by orthophosphate. Allosteric regulation.</text>
</comment>
<comment type="pathway">
    <text>Glycan biosynthesis; starch biosynthesis.</text>
</comment>
<comment type="subunit">
    <text>Heterotetramer.</text>
</comment>
<comment type="subcellular location">
    <subcellularLocation>
        <location evidence="1">Plastid</location>
        <location evidence="1">Chloroplast</location>
    </subcellularLocation>
    <subcellularLocation>
        <location evidence="1">Plastid</location>
        <location evidence="1">Amyloplast</location>
    </subcellularLocation>
    <text>Found in the chloroplast in leaf. Found in the plastid in developing endosperm.</text>
</comment>
<comment type="tissue specificity">
    <text>Abundant in the embryo and is also present in the endosperm.</text>
</comment>
<comment type="similarity">
    <text evidence="3">Belongs to the bacterial/plant glucose-1-phosphate adenylyltransferase family.</text>
</comment>
<sequence>MQFSSVLPLEGKACMSPVRRGSGGYGSERMRINCCSIRRNKALRRMCFSARGAVSSTQCVLTSDAGPDTLVRPNHPFRRNYADPNEVAAVILGGGTGTQLFPLTSTRATPAVPIGGCYRLIDIPMSNCFNSGINKIFVMTQFNSASLNRHIHRTYLGGGINFTDGSVEVLAATQMPGEAAGWFQGTADAVRKFIWVLEDYYKHKAIEHILILSGDQLYRMDYMELVQKHVDDNADITLSCAPVGESRASDYGLVKFDSSGRVIQFSEKPKGAALEEMKVDTSFLNFATCTLPAEYPYIASMGVYVFKRDVLLDLLKSRYAELHDFGSEILPKALHEHNVQAYVFTDYWEDIGTIRSFFDANMALCEQPPKFEFYDPKTPFFTSPRYLPPTKSDKCRIKDAIISHGCFLRECAIEHSIVGVPSRLNSGCELKNTMMMGADLYETEDEISRLLAEGKVPIGVGENTKISNCIIDMNCQGWKERLHNKQRGRSKSPDRPGRRILIRSGIVVVLKNATIKDGTVI</sequence>
<keyword id="KW-0021">Allosteric enzyme</keyword>
<keyword id="KW-0035">Amyloplast</keyword>
<keyword id="KW-0067">ATP-binding</keyword>
<keyword id="KW-0150">Chloroplast</keyword>
<keyword id="KW-0547">Nucleotide-binding</keyword>
<keyword id="KW-0548">Nucleotidyltransferase</keyword>
<keyword id="KW-0934">Plastid</keyword>
<keyword id="KW-1185">Reference proteome</keyword>
<keyword id="KW-0750">Starch biosynthesis</keyword>
<keyword id="KW-0808">Transferase</keyword>
<keyword id="KW-0809">Transit peptide</keyword>
<evidence type="ECO:0000250" key="1"/>
<evidence type="ECO:0000255" key="2"/>
<evidence type="ECO:0000305" key="3"/>
<gene>
    <name type="primary">AGP2</name>
</gene>
<proteinExistence type="evidence at transcript level"/>
<reference key="1">
    <citation type="journal article" date="1995" name="Plant Physiol.">
        <title>The large subunit of the embryo isoform of ADP glucose pyrophosphorylase from maize.</title>
        <authorList>
            <person name="Giroux M."/>
            <person name="Smith-White B."/>
            <person name="Gilmore V."/>
            <person name="Hannah L.C."/>
            <person name="Preiss J."/>
        </authorList>
    </citation>
    <scope>NUCLEOTIDE SEQUENCE [MRNA]</scope>
    <source>
        <strain>cv. Wisconsin 22</strain>
        <tissue>Ear of corn</tissue>
    </source>
</reference>
<organism>
    <name type="scientific">Zea mays</name>
    <name type="common">Maize</name>
    <dbReference type="NCBI Taxonomy" id="4577"/>
    <lineage>
        <taxon>Eukaryota</taxon>
        <taxon>Viridiplantae</taxon>
        <taxon>Streptophyta</taxon>
        <taxon>Embryophyta</taxon>
        <taxon>Tracheophyta</taxon>
        <taxon>Spermatophyta</taxon>
        <taxon>Magnoliopsida</taxon>
        <taxon>Liliopsida</taxon>
        <taxon>Poales</taxon>
        <taxon>Poaceae</taxon>
        <taxon>PACMAD clade</taxon>
        <taxon>Panicoideae</taxon>
        <taxon>Andropogonodae</taxon>
        <taxon>Andropogoneae</taxon>
        <taxon>Tripsacinae</taxon>
        <taxon>Zea</taxon>
    </lineage>
</organism>
<name>GLGL2_MAIZE</name>
<accession>P55234</accession>
<feature type="transit peptide" description="Chloroplast" evidence="2">
    <location>
        <begin position="1"/>
        <end position="47"/>
    </location>
</feature>
<feature type="chain" id="PRO_0000011166" description="Glucose-1-phosphate adenylyltransferase large subunit 2, chloroplastic/amyloplastic">
    <location>
        <begin position="48"/>
        <end position="521"/>
    </location>
</feature>